<organism>
    <name type="scientific">Anaeromyxobacter sp. (strain Fw109-5)</name>
    <dbReference type="NCBI Taxonomy" id="404589"/>
    <lineage>
        <taxon>Bacteria</taxon>
        <taxon>Pseudomonadati</taxon>
        <taxon>Myxococcota</taxon>
        <taxon>Myxococcia</taxon>
        <taxon>Myxococcales</taxon>
        <taxon>Cystobacterineae</taxon>
        <taxon>Anaeromyxobacteraceae</taxon>
        <taxon>Anaeromyxobacter</taxon>
    </lineage>
</organism>
<reference key="1">
    <citation type="journal article" date="2015" name="Genome Announc.">
        <title>Complete genome sequence of Anaeromyxobacter sp. Fw109-5, an anaerobic, metal-reducing bacterium isolated from a contaminated subsurface environment.</title>
        <authorList>
            <person name="Hwang C."/>
            <person name="Copeland A."/>
            <person name="Lucas S."/>
            <person name="Lapidus A."/>
            <person name="Barry K."/>
            <person name="Glavina Del Rio T."/>
            <person name="Dalin E."/>
            <person name="Tice H."/>
            <person name="Pitluck S."/>
            <person name="Sims D."/>
            <person name="Brettin T."/>
            <person name="Bruce D.C."/>
            <person name="Detter J.C."/>
            <person name="Han C.S."/>
            <person name="Schmutz J."/>
            <person name="Larimer F.W."/>
            <person name="Land M.L."/>
            <person name="Hauser L.J."/>
            <person name="Kyrpides N."/>
            <person name="Lykidis A."/>
            <person name="Richardson P."/>
            <person name="Belieav A."/>
            <person name="Sanford R.A."/>
            <person name="Loeffler F.E."/>
            <person name="Fields M.W."/>
        </authorList>
    </citation>
    <scope>NUCLEOTIDE SEQUENCE [LARGE SCALE GENOMIC DNA]</scope>
    <source>
        <strain>Fw109-5</strain>
    </source>
</reference>
<evidence type="ECO:0000255" key="1">
    <source>
        <dbReference type="HAMAP-Rule" id="MF_00494"/>
    </source>
</evidence>
<keyword id="KW-0963">Cytoplasm</keyword>
<keyword id="KW-0570">Pentose shunt</keyword>
<keyword id="KW-1185">Reference proteome</keyword>
<keyword id="KW-0704">Schiff base</keyword>
<keyword id="KW-0808">Transferase</keyword>
<feature type="chain" id="PRO_1000126273" description="Probable transaldolase">
    <location>
        <begin position="1"/>
        <end position="215"/>
    </location>
</feature>
<feature type="active site" description="Schiff-base intermediate with substrate" evidence="1">
    <location>
        <position position="83"/>
    </location>
</feature>
<gene>
    <name evidence="1" type="primary">tal</name>
    <name type="ordered locus">Anae109_0364</name>
</gene>
<sequence length="215" mass="23129">MQFFIDSADVGEIKKALALGLCDGVTTNPSLVAKTGRSFDDVLKEIVALAPGPISAEVTATDAEGMLREARAYAKYGDQVVIKIPLIVEGLRAVKVLSQEGVKTNVTLCFSAVQALLAAKAGATYVSPFVGRLDDISQDGMQLIADILEIYRNYDFDTKVLVASVRHPVHVLEAARLGAHVATIPFGVIEQLAKHPLTDAGLKKFLADWEKVPKR</sequence>
<name>TAL_ANADF</name>
<comment type="function">
    <text evidence="1">Transaldolase is important for the balance of metabolites in the pentose-phosphate pathway.</text>
</comment>
<comment type="catalytic activity">
    <reaction evidence="1">
        <text>D-sedoheptulose 7-phosphate + D-glyceraldehyde 3-phosphate = D-erythrose 4-phosphate + beta-D-fructose 6-phosphate</text>
        <dbReference type="Rhea" id="RHEA:17053"/>
        <dbReference type="ChEBI" id="CHEBI:16897"/>
        <dbReference type="ChEBI" id="CHEBI:57483"/>
        <dbReference type="ChEBI" id="CHEBI:57634"/>
        <dbReference type="ChEBI" id="CHEBI:59776"/>
        <dbReference type="EC" id="2.2.1.2"/>
    </reaction>
</comment>
<comment type="pathway">
    <text evidence="1">Carbohydrate degradation; pentose phosphate pathway; D-glyceraldehyde 3-phosphate and beta-D-fructose 6-phosphate from D-ribose 5-phosphate and D-xylulose 5-phosphate (non-oxidative stage): step 2/3.</text>
</comment>
<comment type="subcellular location">
    <subcellularLocation>
        <location evidence="1">Cytoplasm</location>
    </subcellularLocation>
</comment>
<comment type="similarity">
    <text evidence="1">Belongs to the transaldolase family. Type 3B subfamily.</text>
</comment>
<protein>
    <recommendedName>
        <fullName evidence="1">Probable transaldolase</fullName>
        <ecNumber evidence="1">2.2.1.2</ecNumber>
    </recommendedName>
</protein>
<accession>A7H783</accession>
<proteinExistence type="inferred from homology"/>
<dbReference type="EC" id="2.2.1.2" evidence="1"/>
<dbReference type="EMBL" id="CP000769">
    <property type="protein sequence ID" value="ABS24579.1"/>
    <property type="molecule type" value="Genomic_DNA"/>
</dbReference>
<dbReference type="RefSeq" id="WP_011984685.1">
    <property type="nucleotide sequence ID" value="NC_009675.1"/>
</dbReference>
<dbReference type="SMR" id="A7H783"/>
<dbReference type="STRING" id="404589.Anae109_0364"/>
<dbReference type="KEGG" id="afw:Anae109_0364"/>
<dbReference type="eggNOG" id="COG0176">
    <property type="taxonomic scope" value="Bacteria"/>
</dbReference>
<dbReference type="HOGENOM" id="CLU_079764_0_0_7"/>
<dbReference type="OrthoDB" id="9807051at2"/>
<dbReference type="UniPathway" id="UPA00115">
    <property type="reaction ID" value="UER00414"/>
</dbReference>
<dbReference type="Proteomes" id="UP000006382">
    <property type="component" value="Chromosome"/>
</dbReference>
<dbReference type="GO" id="GO:0005737">
    <property type="term" value="C:cytoplasm"/>
    <property type="evidence" value="ECO:0007669"/>
    <property type="project" value="UniProtKB-SubCell"/>
</dbReference>
<dbReference type="GO" id="GO:0016832">
    <property type="term" value="F:aldehyde-lyase activity"/>
    <property type="evidence" value="ECO:0007669"/>
    <property type="project" value="InterPro"/>
</dbReference>
<dbReference type="GO" id="GO:0004801">
    <property type="term" value="F:transaldolase activity"/>
    <property type="evidence" value="ECO:0007669"/>
    <property type="project" value="UniProtKB-UniRule"/>
</dbReference>
<dbReference type="GO" id="GO:0005975">
    <property type="term" value="P:carbohydrate metabolic process"/>
    <property type="evidence" value="ECO:0007669"/>
    <property type="project" value="InterPro"/>
</dbReference>
<dbReference type="GO" id="GO:0006098">
    <property type="term" value="P:pentose-phosphate shunt"/>
    <property type="evidence" value="ECO:0007669"/>
    <property type="project" value="UniProtKB-UniRule"/>
</dbReference>
<dbReference type="CDD" id="cd00956">
    <property type="entry name" value="Transaldolase_FSA"/>
    <property type="match status" value="1"/>
</dbReference>
<dbReference type="FunFam" id="3.20.20.70:FF:000018">
    <property type="entry name" value="Probable transaldolase"/>
    <property type="match status" value="1"/>
</dbReference>
<dbReference type="Gene3D" id="3.20.20.70">
    <property type="entry name" value="Aldolase class I"/>
    <property type="match status" value="1"/>
</dbReference>
<dbReference type="HAMAP" id="MF_00494">
    <property type="entry name" value="Transaldolase_3b"/>
    <property type="match status" value="1"/>
</dbReference>
<dbReference type="InterPro" id="IPR013785">
    <property type="entry name" value="Aldolase_TIM"/>
</dbReference>
<dbReference type="InterPro" id="IPR001585">
    <property type="entry name" value="TAL/FSA"/>
</dbReference>
<dbReference type="InterPro" id="IPR022999">
    <property type="entry name" value="Transaldolase_3B"/>
</dbReference>
<dbReference type="InterPro" id="IPR004731">
    <property type="entry name" value="Transaldolase_3B/F6P_aldolase"/>
</dbReference>
<dbReference type="InterPro" id="IPR018225">
    <property type="entry name" value="Transaldolase_AS"/>
</dbReference>
<dbReference type="InterPro" id="IPR033919">
    <property type="entry name" value="TSA/FSA_arc/bac"/>
</dbReference>
<dbReference type="NCBIfam" id="TIGR00875">
    <property type="entry name" value="fsa_talC_mipB"/>
    <property type="match status" value="1"/>
</dbReference>
<dbReference type="PANTHER" id="PTHR10683:SF40">
    <property type="entry name" value="FRUCTOSE-6-PHOSPHATE ALDOLASE 1-RELATED"/>
    <property type="match status" value="1"/>
</dbReference>
<dbReference type="PANTHER" id="PTHR10683">
    <property type="entry name" value="TRANSALDOLASE"/>
    <property type="match status" value="1"/>
</dbReference>
<dbReference type="Pfam" id="PF00923">
    <property type="entry name" value="TAL_FSA"/>
    <property type="match status" value="1"/>
</dbReference>
<dbReference type="SUPFAM" id="SSF51569">
    <property type="entry name" value="Aldolase"/>
    <property type="match status" value="1"/>
</dbReference>
<dbReference type="PROSITE" id="PS01054">
    <property type="entry name" value="TRANSALDOLASE_1"/>
    <property type="match status" value="1"/>
</dbReference>